<proteinExistence type="inferred from homology"/>
<protein>
    <recommendedName>
        <fullName evidence="1">Cell division protein ZipA</fullName>
    </recommendedName>
</protein>
<dbReference type="EMBL" id="AP009240">
    <property type="protein sequence ID" value="BAG78227.1"/>
    <property type="molecule type" value="Genomic_DNA"/>
</dbReference>
<dbReference type="RefSeq" id="WP_001297862.1">
    <property type="nucleotide sequence ID" value="NC_011415.1"/>
</dbReference>
<dbReference type="SMR" id="B6I4Y9"/>
<dbReference type="GeneID" id="75204317"/>
<dbReference type="KEGG" id="ecy:ECSE_2703"/>
<dbReference type="HOGENOM" id="CLU_030174_1_0_6"/>
<dbReference type="Proteomes" id="UP000008199">
    <property type="component" value="Chromosome"/>
</dbReference>
<dbReference type="GO" id="GO:0032153">
    <property type="term" value="C:cell division site"/>
    <property type="evidence" value="ECO:0007669"/>
    <property type="project" value="UniProtKB-UniRule"/>
</dbReference>
<dbReference type="GO" id="GO:0005886">
    <property type="term" value="C:plasma membrane"/>
    <property type="evidence" value="ECO:0007669"/>
    <property type="project" value="UniProtKB-SubCell"/>
</dbReference>
<dbReference type="GO" id="GO:0000917">
    <property type="term" value="P:division septum assembly"/>
    <property type="evidence" value="ECO:0007669"/>
    <property type="project" value="TreeGrafter"/>
</dbReference>
<dbReference type="GO" id="GO:0043093">
    <property type="term" value="P:FtsZ-dependent cytokinesis"/>
    <property type="evidence" value="ECO:0007669"/>
    <property type="project" value="UniProtKB-UniRule"/>
</dbReference>
<dbReference type="CDD" id="cd00231">
    <property type="entry name" value="ZipA"/>
    <property type="match status" value="1"/>
</dbReference>
<dbReference type="FunFam" id="3.30.1400.10:FF:000001">
    <property type="entry name" value="Cell division protein ZipA"/>
    <property type="match status" value="1"/>
</dbReference>
<dbReference type="Gene3D" id="3.30.1400.10">
    <property type="entry name" value="ZipA, C-terminal FtsZ-binding domain"/>
    <property type="match status" value="1"/>
</dbReference>
<dbReference type="HAMAP" id="MF_00509">
    <property type="entry name" value="ZipA"/>
    <property type="match status" value="1"/>
</dbReference>
<dbReference type="InterPro" id="IPR011919">
    <property type="entry name" value="Cell_div_ZipA"/>
</dbReference>
<dbReference type="InterPro" id="IPR007449">
    <property type="entry name" value="ZipA_FtsZ-bd_C"/>
</dbReference>
<dbReference type="InterPro" id="IPR036765">
    <property type="entry name" value="ZipA_FtsZ-bd_C_sf"/>
</dbReference>
<dbReference type="NCBIfam" id="TIGR02205">
    <property type="entry name" value="septum_zipA"/>
    <property type="match status" value="1"/>
</dbReference>
<dbReference type="PANTHER" id="PTHR38685">
    <property type="entry name" value="CELL DIVISION PROTEIN ZIPA"/>
    <property type="match status" value="1"/>
</dbReference>
<dbReference type="PANTHER" id="PTHR38685:SF1">
    <property type="entry name" value="CELL DIVISION PROTEIN ZIPA"/>
    <property type="match status" value="1"/>
</dbReference>
<dbReference type="Pfam" id="PF04354">
    <property type="entry name" value="ZipA_C"/>
    <property type="match status" value="1"/>
</dbReference>
<dbReference type="SMART" id="SM00771">
    <property type="entry name" value="ZipA_C"/>
    <property type="match status" value="1"/>
</dbReference>
<dbReference type="SUPFAM" id="SSF64383">
    <property type="entry name" value="Cell-division protein ZipA, C-terminal domain"/>
    <property type="match status" value="1"/>
</dbReference>
<sequence>MMQDLRLILIIVGAIAIIALLVHGFWTSRKERSSMFRDRPLKRMKSKRDDDSYDEDVEDDEGVGEVRVHRVNHAPANAQEHEAARPSPQHQYQPPYASAQPRQPVQQPPEAQVPPQHAPRPAQPVQQPAYQPQPEQPLQQPVSPQVAPAPQPVHSAPQPAQQAFQPAEPVAAPQPEPVAEPAPVMDKPKRKEAVIIMNVAAHHGSELNGELLLNSIQQAGFIFGDMNIYHRHLSPDGSGPALFSLANMVKPGTFDPEMKDFTTPGVTIFMQVPSYGDELQNFKLMLQSAQHIADEVGGVVLDDQRRMMTPQKLREYQDIIREVKDANA</sequence>
<evidence type="ECO:0000255" key="1">
    <source>
        <dbReference type="HAMAP-Rule" id="MF_00509"/>
    </source>
</evidence>
<evidence type="ECO:0000256" key="2">
    <source>
        <dbReference type="SAM" id="MobiDB-lite"/>
    </source>
</evidence>
<comment type="function">
    <text evidence="1">Essential cell division protein that stabilizes the FtsZ protofilaments by cross-linking them and that serves as a cytoplasmic membrane anchor for the Z ring. Also required for the recruitment to the septal ring of downstream cell division proteins.</text>
</comment>
<comment type="subunit">
    <text evidence="1">Interacts with FtsZ via their C-terminal domains.</text>
</comment>
<comment type="subcellular location">
    <subcellularLocation>
        <location evidence="1">Cell inner membrane</location>
        <topology evidence="1">Single-pass type I membrane protein</topology>
    </subcellularLocation>
    <text evidence="1">Localizes to the Z ring in an FtsZ-dependent manner.</text>
</comment>
<comment type="similarity">
    <text evidence="1">Belongs to the ZipA family.</text>
</comment>
<gene>
    <name evidence="1" type="primary">zipA</name>
    <name type="ordered locus">ECSE_2703</name>
</gene>
<accession>B6I4Y9</accession>
<feature type="chain" id="PRO_1000127219" description="Cell division protein ZipA">
    <location>
        <begin position="1"/>
        <end position="328"/>
    </location>
</feature>
<feature type="topological domain" description="Periplasmic" evidence="1">
    <location>
        <begin position="1"/>
        <end position="6"/>
    </location>
</feature>
<feature type="transmembrane region" description="Helical" evidence="1">
    <location>
        <begin position="7"/>
        <end position="27"/>
    </location>
</feature>
<feature type="topological domain" description="Cytoplasmic" evidence="1">
    <location>
        <begin position="28"/>
        <end position="328"/>
    </location>
</feature>
<feature type="region of interest" description="Disordered" evidence="2">
    <location>
        <begin position="42"/>
        <end position="186"/>
    </location>
</feature>
<feature type="compositionally biased region" description="Acidic residues" evidence="2">
    <location>
        <begin position="51"/>
        <end position="63"/>
    </location>
</feature>
<feature type="compositionally biased region" description="Low complexity" evidence="2">
    <location>
        <begin position="99"/>
        <end position="115"/>
    </location>
</feature>
<feature type="compositionally biased region" description="Low complexity" evidence="2">
    <location>
        <begin position="123"/>
        <end position="171"/>
    </location>
</feature>
<name>ZIPA_ECOSE</name>
<keyword id="KW-0131">Cell cycle</keyword>
<keyword id="KW-0132">Cell division</keyword>
<keyword id="KW-0997">Cell inner membrane</keyword>
<keyword id="KW-1003">Cell membrane</keyword>
<keyword id="KW-0472">Membrane</keyword>
<keyword id="KW-0812">Transmembrane</keyword>
<keyword id="KW-1133">Transmembrane helix</keyword>
<organism>
    <name type="scientific">Escherichia coli (strain SE11)</name>
    <dbReference type="NCBI Taxonomy" id="409438"/>
    <lineage>
        <taxon>Bacteria</taxon>
        <taxon>Pseudomonadati</taxon>
        <taxon>Pseudomonadota</taxon>
        <taxon>Gammaproteobacteria</taxon>
        <taxon>Enterobacterales</taxon>
        <taxon>Enterobacteriaceae</taxon>
        <taxon>Escherichia</taxon>
    </lineage>
</organism>
<reference key="1">
    <citation type="journal article" date="2008" name="DNA Res.">
        <title>Complete genome sequence and comparative analysis of the wild-type commensal Escherichia coli strain SE11 isolated from a healthy adult.</title>
        <authorList>
            <person name="Oshima K."/>
            <person name="Toh H."/>
            <person name="Ogura Y."/>
            <person name="Sasamoto H."/>
            <person name="Morita H."/>
            <person name="Park S.-H."/>
            <person name="Ooka T."/>
            <person name="Iyoda S."/>
            <person name="Taylor T.D."/>
            <person name="Hayashi T."/>
            <person name="Itoh K."/>
            <person name="Hattori M."/>
        </authorList>
    </citation>
    <scope>NUCLEOTIDE SEQUENCE [LARGE SCALE GENOMIC DNA]</scope>
    <source>
        <strain>SE11</strain>
    </source>
</reference>